<dbReference type="EMBL" id="AJ704765">
    <property type="protein sequence ID" value="CAG28925.1"/>
    <property type="molecule type" value="mRNA"/>
</dbReference>
<dbReference type="EMBL" id="AJ704766">
    <property type="protein sequence ID" value="CAG28926.1"/>
    <property type="molecule type" value="mRNA"/>
</dbReference>
<dbReference type="EMBL" id="AL050256">
    <property type="protein sequence ID" value="CAB43358.1"/>
    <property type="molecule type" value="mRNA"/>
</dbReference>
<dbReference type="EMBL" id="AK315264">
    <property type="protein sequence ID" value="BAG37681.1"/>
    <property type="molecule type" value="mRNA"/>
</dbReference>
<dbReference type="EMBL" id="Z82248">
    <property type="status" value="NOT_ANNOTATED_CDS"/>
    <property type="molecule type" value="Genomic_DNA"/>
</dbReference>
<dbReference type="EMBL" id="CH471095">
    <property type="protein sequence ID" value="EAW60000.1"/>
    <property type="molecule type" value="Genomic_DNA"/>
</dbReference>
<dbReference type="RefSeq" id="NP_001289748.1">
    <property type="nucleotide sequence ID" value="NM_001302819.1"/>
</dbReference>
<dbReference type="RefSeq" id="NP_001289749.1">
    <property type="nucleotide sequence ID" value="NM_001302820.1"/>
</dbReference>
<dbReference type="RefSeq" id="NP_056187.1">
    <property type="nucleotide sequence ID" value="NM_015372.2"/>
</dbReference>
<dbReference type="BioMuta" id="HGNC:23051"/>
<dbReference type="DMDM" id="68565618"/>
<dbReference type="PaxDb" id="9606-ENSP00000248984"/>
<dbReference type="DNASU" id="25775"/>
<dbReference type="AGR" id="HGNC:23051"/>
<dbReference type="DisGeNET" id="25775"/>
<dbReference type="GeneCards" id="YWHAH-AS1"/>
<dbReference type="HGNC" id="HGNC:23051">
    <property type="gene designation" value="YWHAH-AS1"/>
</dbReference>
<dbReference type="neXtProt" id="NX_Q9Y442"/>
<dbReference type="eggNOG" id="ENOG502TESK">
    <property type="taxonomic scope" value="Eukaryota"/>
</dbReference>
<dbReference type="InParanoid" id="Q9Y442"/>
<dbReference type="PAN-GO" id="Q9Y442">
    <property type="GO annotations" value="0 GO annotations based on evolutionary models"/>
</dbReference>
<dbReference type="PhylomeDB" id="Q9Y442"/>
<dbReference type="TreeFam" id="TF342227"/>
<dbReference type="PathwayCommons" id="Q9Y442"/>
<dbReference type="BioGRID-ORCS" id="25775">
    <property type="hits" value="11 hits in 1117 CRISPR screens"/>
</dbReference>
<dbReference type="ChiTaRS" id="C22orf24">
    <property type="organism name" value="human"/>
</dbReference>
<dbReference type="Pharos" id="Q9Y442">
    <property type="development level" value="Tdark"/>
</dbReference>
<dbReference type="Proteomes" id="UP000005640">
    <property type="component" value="Unplaced"/>
</dbReference>
<dbReference type="RNAct" id="Q9Y442">
    <property type="molecule type" value="protein"/>
</dbReference>
<dbReference type="GO" id="GO:0016020">
    <property type="term" value="C:membrane"/>
    <property type="evidence" value="ECO:0007669"/>
    <property type="project" value="UniProtKB-SubCell"/>
</dbReference>
<proteinExistence type="uncertain"/>
<name>CV024_HUMAN</name>
<comment type="subcellular location">
    <subcellularLocation>
        <location evidence="3">Membrane</location>
        <topology evidence="3">Single-pass membrane protein</topology>
    </subcellularLocation>
</comment>
<comment type="alternative products">
    <event type="alternative splicing"/>
    <isoform>
        <id>Q9Y442-1</id>
        <name>1</name>
        <sequence type="displayed"/>
    </isoform>
    <isoform>
        <id>Q9Y442-2</id>
        <name>2</name>
        <sequence type="described" ref="VSP_014604 VSP_014605"/>
    </isoform>
</comment>
<comment type="caution">
    <text evidence="3">Product of a dubious CDS prediction.</text>
</comment>
<evidence type="ECO:0000255" key="1"/>
<evidence type="ECO:0000303" key="2">
    <source ref="1"/>
</evidence>
<evidence type="ECO:0000305" key="3"/>
<evidence type="ECO:0000312" key="4">
    <source>
        <dbReference type="HGNC" id="HGNC:23051"/>
    </source>
</evidence>
<sequence>MTTQEDTTGLHQKTSLWTMSRPGAKKVMNSYFIAGCGPAVCYYAVSWLRQGFSINLTSFGRIPWPHAGVGTCPSPQSWISPFLQSHREHHYAKTSSHSQPSPQSLALCLAYSRCSINICQMTECISLASGCHQALREPGRSEESFWIPATPYISNIFSES</sequence>
<protein>
    <recommendedName>
        <fullName evidence="3">Putative uncharacterized protein YWHAH-AS1</fullName>
    </recommendedName>
    <alternativeName>
        <fullName evidence="4">YWHAH antisense RNA 1</fullName>
    </alternativeName>
</protein>
<keyword id="KW-0025">Alternative splicing</keyword>
<keyword id="KW-0472">Membrane</keyword>
<keyword id="KW-1185">Reference proteome</keyword>
<keyword id="KW-0812">Transmembrane</keyword>
<keyword id="KW-1133">Transmembrane helix</keyword>
<accession>Q9Y442</accession>
<accession>B2RCT4</accession>
<accession>Q5K3R1</accession>
<feature type="chain" id="PRO_0000079578" description="Putative uncharacterized protein YWHAH-AS1">
    <location>
        <begin position="1"/>
        <end position="160"/>
    </location>
</feature>
<feature type="transmembrane region" description="Helical" evidence="1">
    <location>
        <begin position="27"/>
        <end position="47"/>
    </location>
</feature>
<feature type="splice variant" id="VSP_014604" description="In isoform 2." evidence="2">
    <original>MNSY</original>
    <variation>SVST</variation>
    <location>
        <begin position="28"/>
        <end position="31"/>
    </location>
</feature>
<feature type="splice variant" id="VSP_014605" description="In isoform 2." evidence="2">
    <location>
        <begin position="32"/>
        <end position="160"/>
    </location>
</feature>
<feature type="sequence variant" id="VAR_050934" description="In dbSNP:rs1984388.">
    <original>H</original>
    <variation>L</variation>
    <location>
        <position position="11"/>
    </location>
</feature>
<reference key="1">
    <citation type="submission" date="2004-05" db="EMBL/GenBank/DDBJ databases">
        <title>Analysis of the homozygously deleted region on 22q12 in a human glioblastoma.</title>
        <authorList>
            <person name="Ichimura K."/>
            <person name="Seng T."/>
            <person name="Liu L."/>
            <person name="Pearson D."/>
            <person name="Collins V."/>
        </authorList>
    </citation>
    <scope>NUCLEOTIDE SEQUENCE [MRNA] (ISOFORMS 1 AND 2)</scope>
    <source>
        <tissue>Cerebellum</tissue>
    </source>
</reference>
<reference key="2">
    <citation type="submission" date="1999-05" db="EMBL/GenBank/DDBJ databases">
        <authorList>
            <person name="Collins J.E."/>
            <person name="Huckle E.J."/>
        </authorList>
    </citation>
    <scope>NUCLEOTIDE SEQUENCE [MRNA] (ISOFORM 1)</scope>
</reference>
<reference key="3">
    <citation type="journal article" date="2004" name="Nat. Genet.">
        <title>Complete sequencing and characterization of 21,243 full-length human cDNAs.</title>
        <authorList>
            <person name="Ota T."/>
            <person name="Suzuki Y."/>
            <person name="Nishikawa T."/>
            <person name="Otsuki T."/>
            <person name="Sugiyama T."/>
            <person name="Irie R."/>
            <person name="Wakamatsu A."/>
            <person name="Hayashi K."/>
            <person name="Sato H."/>
            <person name="Nagai K."/>
            <person name="Kimura K."/>
            <person name="Makita H."/>
            <person name="Sekine M."/>
            <person name="Obayashi M."/>
            <person name="Nishi T."/>
            <person name="Shibahara T."/>
            <person name="Tanaka T."/>
            <person name="Ishii S."/>
            <person name="Yamamoto J."/>
            <person name="Saito K."/>
            <person name="Kawai Y."/>
            <person name="Isono Y."/>
            <person name="Nakamura Y."/>
            <person name="Nagahari K."/>
            <person name="Murakami K."/>
            <person name="Yasuda T."/>
            <person name="Iwayanagi T."/>
            <person name="Wagatsuma M."/>
            <person name="Shiratori A."/>
            <person name="Sudo H."/>
            <person name="Hosoiri T."/>
            <person name="Kaku Y."/>
            <person name="Kodaira H."/>
            <person name="Kondo H."/>
            <person name="Sugawara M."/>
            <person name="Takahashi M."/>
            <person name="Kanda K."/>
            <person name="Yokoi T."/>
            <person name="Furuya T."/>
            <person name="Kikkawa E."/>
            <person name="Omura Y."/>
            <person name="Abe K."/>
            <person name="Kamihara K."/>
            <person name="Katsuta N."/>
            <person name="Sato K."/>
            <person name="Tanikawa M."/>
            <person name="Yamazaki M."/>
            <person name="Ninomiya K."/>
            <person name="Ishibashi T."/>
            <person name="Yamashita H."/>
            <person name="Murakawa K."/>
            <person name="Fujimori K."/>
            <person name="Tanai H."/>
            <person name="Kimata M."/>
            <person name="Watanabe M."/>
            <person name="Hiraoka S."/>
            <person name="Chiba Y."/>
            <person name="Ishida S."/>
            <person name="Ono Y."/>
            <person name="Takiguchi S."/>
            <person name="Watanabe S."/>
            <person name="Yosida M."/>
            <person name="Hotuta T."/>
            <person name="Kusano J."/>
            <person name="Kanehori K."/>
            <person name="Takahashi-Fujii A."/>
            <person name="Hara H."/>
            <person name="Tanase T.-O."/>
            <person name="Nomura Y."/>
            <person name="Togiya S."/>
            <person name="Komai F."/>
            <person name="Hara R."/>
            <person name="Takeuchi K."/>
            <person name="Arita M."/>
            <person name="Imose N."/>
            <person name="Musashino K."/>
            <person name="Yuuki H."/>
            <person name="Oshima A."/>
            <person name="Sasaki N."/>
            <person name="Aotsuka S."/>
            <person name="Yoshikawa Y."/>
            <person name="Matsunawa H."/>
            <person name="Ichihara T."/>
            <person name="Shiohata N."/>
            <person name="Sano S."/>
            <person name="Moriya S."/>
            <person name="Momiyama H."/>
            <person name="Satoh N."/>
            <person name="Takami S."/>
            <person name="Terashima Y."/>
            <person name="Suzuki O."/>
            <person name="Nakagawa S."/>
            <person name="Senoh A."/>
            <person name="Mizoguchi H."/>
            <person name="Goto Y."/>
            <person name="Shimizu F."/>
            <person name="Wakebe H."/>
            <person name="Hishigaki H."/>
            <person name="Watanabe T."/>
            <person name="Sugiyama A."/>
            <person name="Takemoto M."/>
            <person name="Kawakami B."/>
            <person name="Yamazaki M."/>
            <person name="Watanabe K."/>
            <person name="Kumagai A."/>
            <person name="Itakura S."/>
            <person name="Fukuzumi Y."/>
            <person name="Fujimori Y."/>
            <person name="Komiyama M."/>
            <person name="Tashiro H."/>
            <person name="Tanigami A."/>
            <person name="Fujiwara T."/>
            <person name="Ono T."/>
            <person name="Yamada K."/>
            <person name="Fujii Y."/>
            <person name="Ozaki K."/>
            <person name="Hirao M."/>
            <person name="Ohmori Y."/>
            <person name="Kawabata A."/>
            <person name="Hikiji T."/>
            <person name="Kobatake N."/>
            <person name="Inagaki H."/>
            <person name="Ikema Y."/>
            <person name="Okamoto S."/>
            <person name="Okitani R."/>
            <person name="Kawakami T."/>
            <person name="Noguchi S."/>
            <person name="Itoh T."/>
            <person name="Shigeta K."/>
            <person name="Senba T."/>
            <person name="Matsumura K."/>
            <person name="Nakajima Y."/>
            <person name="Mizuno T."/>
            <person name="Morinaga M."/>
            <person name="Sasaki M."/>
            <person name="Togashi T."/>
            <person name="Oyama M."/>
            <person name="Hata H."/>
            <person name="Watanabe M."/>
            <person name="Komatsu T."/>
            <person name="Mizushima-Sugano J."/>
            <person name="Satoh T."/>
            <person name="Shirai Y."/>
            <person name="Takahashi Y."/>
            <person name="Nakagawa K."/>
            <person name="Okumura K."/>
            <person name="Nagase T."/>
            <person name="Nomura N."/>
            <person name="Kikuchi H."/>
            <person name="Masuho Y."/>
            <person name="Yamashita R."/>
            <person name="Nakai K."/>
            <person name="Yada T."/>
            <person name="Nakamura Y."/>
            <person name="Ohara O."/>
            <person name="Isogai T."/>
            <person name="Sugano S."/>
        </authorList>
    </citation>
    <scope>NUCLEOTIDE SEQUENCE [LARGE SCALE MRNA] (ISOFORM 1)</scope>
    <source>
        <tissue>Brain</tissue>
    </source>
</reference>
<reference key="4">
    <citation type="journal article" date="1999" name="Nature">
        <title>The DNA sequence of human chromosome 22.</title>
        <authorList>
            <person name="Dunham I."/>
            <person name="Hunt A.R."/>
            <person name="Collins J.E."/>
            <person name="Bruskiewich R."/>
            <person name="Beare D.M."/>
            <person name="Clamp M."/>
            <person name="Smink L.J."/>
            <person name="Ainscough R."/>
            <person name="Almeida J.P."/>
            <person name="Babbage A.K."/>
            <person name="Bagguley C."/>
            <person name="Bailey J."/>
            <person name="Barlow K.F."/>
            <person name="Bates K.N."/>
            <person name="Beasley O.P."/>
            <person name="Bird C.P."/>
            <person name="Blakey S.E."/>
            <person name="Bridgeman A.M."/>
            <person name="Buck D."/>
            <person name="Burgess J."/>
            <person name="Burrill W.D."/>
            <person name="Burton J."/>
            <person name="Carder C."/>
            <person name="Carter N.P."/>
            <person name="Chen Y."/>
            <person name="Clark G."/>
            <person name="Clegg S.M."/>
            <person name="Cobley V.E."/>
            <person name="Cole C.G."/>
            <person name="Collier R.E."/>
            <person name="Connor R."/>
            <person name="Conroy D."/>
            <person name="Corby N.R."/>
            <person name="Coville G.J."/>
            <person name="Cox A.V."/>
            <person name="Davis J."/>
            <person name="Dawson E."/>
            <person name="Dhami P.D."/>
            <person name="Dockree C."/>
            <person name="Dodsworth S.J."/>
            <person name="Durbin R.M."/>
            <person name="Ellington A.G."/>
            <person name="Evans K.L."/>
            <person name="Fey J.M."/>
            <person name="Fleming K."/>
            <person name="French L."/>
            <person name="Garner A.A."/>
            <person name="Gilbert J.G.R."/>
            <person name="Goward M.E."/>
            <person name="Grafham D.V."/>
            <person name="Griffiths M.N.D."/>
            <person name="Hall C."/>
            <person name="Hall R.E."/>
            <person name="Hall-Tamlyn G."/>
            <person name="Heathcott R.W."/>
            <person name="Ho S."/>
            <person name="Holmes S."/>
            <person name="Hunt S.E."/>
            <person name="Jones M.C."/>
            <person name="Kershaw J."/>
            <person name="Kimberley A.M."/>
            <person name="King A."/>
            <person name="Laird G.K."/>
            <person name="Langford C.F."/>
            <person name="Leversha M.A."/>
            <person name="Lloyd C."/>
            <person name="Lloyd D.M."/>
            <person name="Martyn I.D."/>
            <person name="Mashreghi-Mohammadi M."/>
            <person name="Matthews L.H."/>
            <person name="Mccann O.T."/>
            <person name="Mcclay J."/>
            <person name="Mclaren S."/>
            <person name="McMurray A.A."/>
            <person name="Milne S.A."/>
            <person name="Mortimore B.J."/>
            <person name="Odell C.N."/>
            <person name="Pavitt R."/>
            <person name="Pearce A.V."/>
            <person name="Pearson D."/>
            <person name="Phillimore B.J.C.T."/>
            <person name="Phillips S.H."/>
            <person name="Plumb R.W."/>
            <person name="Ramsay H."/>
            <person name="Ramsey Y."/>
            <person name="Rogers L."/>
            <person name="Ross M.T."/>
            <person name="Scott C.E."/>
            <person name="Sehra H.K."/>
            <person name="Skuce C.D."/>
            <person name="Smalley S."/>
            <person name="Smith M.L."/>
            <person name="Soderlund C."/>
            <person name="Spragon L."/>
            <person name="Steward C.A."/>
            <person name="Sulston J.E."/>
            <person name="Swann R.M."/>
            <person name="Vaudin M."/>
            <person name="Wall M."/>
            <person name="Wallis J.M."/>
            <person name="Whiteley M.N."/>
            <person name="Willey D.L."/>
            <person name="Williams L."/>
            <person name="Williams S.A."/>
            <person name="Williamson H."/>
            <person name="Wilmer T.E."/>
            <person name="Wilming L."/>
            <person name="Wright C.L."/>
            <person name="Hubbard T."/>
            <person name="Bentley D.R."/>
            <person name="Beck S."/>
            <person name="Rogers J."/>
            <person name="Shimizu N."/>
            <person name="Minoshima S."/>
            <person name="Kawasaki K."/>
            <person name="Sasaki T."/>
            <person name="Asakawa S."/>
            <person name="Kudoh J."/>
            <person name="Shintani A."/>
            <person name="Shibuya K."/>
            <person name="Yoshizaki Y."/>
            <person name="Aoki N."/>
            <person name="Mitsuyama S."/>
            <person name="Roe B.A."/>
            <person name="Chen F."/>
            <person name="Chu L."/>
            <person name="Crabtree J."/>
            <person name="Deschamps S."/>
            <person name="Do A."/>
            <person name="Do T."/>
            <person name="Dorman A."/>
            <person name="Fang F."/>
            <person name="Fu Y."/>
            <person name="Hu P."/>
            <person name="Hua A."/>
            <person name="Kenton S."/>
            <person name="Lai H."/>
            <person name="Lao H.I."/>
            <person name="Lewis J."/>
            <person name="Lewis S."/>
            <person name="Lin S.-P."/>
            <person name="Loh P."/>
            <person name="Malaj E."/>
            <person name="Nguyen T."/>
            <person name="Pan H."/>
            <person name="Phan S."/>
            <person name="Qi S."/>
            <person name="Qian Y."/>
            <person name="Ray L."/>
            <person name="Ren Q."/>
            <person name="Shaull S."/>
            <person name="Sloan D."/>
            <person name="Song L."/>
            <person name="Wang Q."/>
            <person name="Wang Y."/>
            <person name="Wang Z."/>
            <person name="White J."/>
            <person name="Willingham D."/>
            <person name="Wu H."/>
            <person name="Yao Z."/>
            <person name="Zhan M."/>
            <person name="Zhang G."/>
            <person name="Chissoe S."/>
            <person name="Murray J."/>
            <person name="Miller N."/>
            <person name="Minx P."/>
            <person name="Fulton R."/>
            <person name="Johnson D."/>
            <person name="Bemis G."/>
            <person name="Bentley D."/>
            <person name="Bradshaw H."/>
            <person name="Bourne S."/>
            <person name="Cordes M."/>
            <person name="Du Z."/>
            <person name="Fulton L."/>
            <person name="Goela D."/>
            <person name="Graves T."/>
            <person name="Hawkins J."/>
            <person name="Hinds K."/>
            <person name="Kemp K."/>
            <person name="Latreille P."/>
            <person name="Layman D."/>
            <person name="Ozersky P."/>
            <person name="Rohlfing T."/>
            <person name="Scheet P."/>
            <person name="Walker C."/>
            <person name="Wamsley A."/>
            <person name="Wohldmann P."/>
            <person name="Pepin K."/>
            <person name="Nelson J."/>
            <person name="Korf I."/>
            <person name="Bedell J.A."/>
            <person name="Hillier L.W."/>
            <person name="Mardis E."/>
            <person name="Waterston R."/>
            <person name="Wilson R."/>
            <person name="Emanuel B.S."/>
            <person name="Shaikh T."/>
            <person name="Kurahashi H."/>
            <person name="Saitta S."/>
            <person name="Budarf M.L."/>
            <person name="McDermid H.E."/>
            <person name="Johnson A."/>
            <person name="Wong A.C.C."/>
            <person name="Morrow B.E."/>
            <person name="Edelmann L."/>
            <person name="Kim U.J."/>
            <person name="Shizuya H."/>
            <person name="Simon M.I."/>
            <person name="Dumanski J.P."/>
            <person name="Peyrard M."/>
            <person name="Kedra D."/>
            <person name="Seroussi E."/>
            <person name="Fransson I."/>
            <person name="Tapia I."/>
            <person name="Bruder C.E."/>
            <person name="O'Brien K.P."/>
            <person name="Wilkinson P."/>
            <person name="Bodenteich A."/>
            <person name="Hartman K."/>
            <person name="Hu X."/>
            <person name="Khan A.S."/>
            <person name="Lane L."/>
            <person name="Tilahun Y."/>
            <person name="Wright H."/>
        </authorList>
    </citation>
    <scope>NUCLEOTIDE SEQUENCE [LARGE SCALE GENOMIC DNA]</scope>
</reference>
<reference key="5">
    <citation type="submission" date="2005-07" db="EMBL/GenBank/DDBJ databases">
        <authorList>
            <person name="Mural R.J."/>
            <person name="Istrail S."/>
            <person name="Sutton G.G."/>
            <person name="Florea L."/>
            <person name="Halpern A.L."/>
            <person name="Mobarry C.M."/>
            <person name="Lippert R."/>
            <person name="Walenz B."/>
            <person name="Shatkay H."/>
            <person name="Dew I."/>
            <person name="Miller J.R."/>
            <person name="Flanigan M.J."/>
            <person name="Edwards N.J."/>
            <person name="Bolanos R."/>
            <person name="Fasulo D."/>
            <person name="Halldorsson B.V."/>
            <person name="Hannenhalli S."/>
            <person name="Turner R."/>
            <person name="Yooseph S."/>
            <person name="Lu F."/>
            <person name="Nusskern D.R."/>
            <person name="Shue B.C."/>
            <person name="Zheng X.H."/>
            <person name="Zhong F."/>
            <person name="Delcher A.L."/>
            <person name="Huson D.H."/>
            <person name="Kravitz S.A."/>
            <person name="Mouchard L."/>
            <person name="Reinert K."/>
            <person name="Remington K.A."/>
            <person name="Clark A.G."/>
            <person name="Waterman M.S."/>
            <person name="Eichler E.E."/>
            <person name="Adams M.D."/>
            <person name="Hunkapiller M.W."/>
            <person name="Myers E.W."/>
            <person name="Venter J.C."/>
        </authorList>
    </citation>
    <scope>NUCLEOTIDE SEQUENCE [LARGE SCALE GENOMIC DNA]</scope>
</reference>
<gene>
    <name evidence="4" type="primary">YWHAH-AS1</name>
    <name evidence="4" type="synonym">C22orf24</name>
</gene>
<organism>
    <name type="scientific">Homo sapiens</name>
    <name type="common">Human</name>
    <dbReference type="NCBI Taxonomy" id="9606"/>
    <lineage>
        <taxon>Eukaryota</taxon>
        <taxon>Metazoa</taxon>
        <taxon>Chordata</taxon>
        <taxon>Craniata</taxon>
        <taxon>Vertebrata</taxon>
        <taxon>Euteleostomi</taxon>
        <taxon>Mammalia</taxon>
        <taxon>Eutheria</taxon>
        <taxon>Euarchontoglires</taxon>
        <taxon>Primates</taxon>
        <taxon>Haplorrhini</taxon>
        <taxon>Catarrhini</taxon>
        <taxon>Hominidae</taxon>
        <taxon>Homo</taxon>
    </lineage>
</organism>